<protein>
    <recommendedName>
        <fullName>Matrix protein</fullName>
    </recommendedName>
    <alternativeName>
        <fullName>gp18</fullName>
    </alternativeName>
    <alternativeName>
        <fullName>p16</fullName>
    </alternativeName>
</protein>
<accession>P0C794</accession>
<accession>P52637</accession>
<organismHost>
    <name type="scientific">Bos taurus</name>
    <name type="common">Bovine</name>
    <dbReference type="NCBI Taxonomy" id="9913"/>
</organismHost>
<organismHost>
    <name type="scientific">Bradypodidae</name>
    <name type="common">three-fingered sloths</name>
    <dbReference type="NCBI Taxonomy" id="9352"/>
</organismHost>
<organismHost>
    <name type="scientific">Capra hircus</name>
    <name type="common">Goat</name>
    <dbReference type="NCBI Taxonomy" id="9925"/>
</organismHost>
<organismHost>
    <name type="scientific">Cervidae</name>
    <name type="common">Deer</name>
    <dbReference type="NCBI Taxonomy" id="9850"/>
</organismHost>
<organismHost>
    <name type="scientific">Crocidura leucodon</name>
    <name type="common">Bicoloured white-toothed shrew</name>
    <name type="synonym">Celebes shrew</name>
    <dbReference type="NCBI Taxonomy" id="109474"/>
</organismHost>
<organismHost>
    <name type="scientific">Equidae</name>
    <name type="common">horses</name>
    <dbReference type="NCBI Taxonomy" id="9788"/>
</organismHost>
<organismHost>
    <name type="scientific">Felis catus</name>
    <name type="common">Cat</name>
    <name type="synonym">Felis silvestris catus</name>
    <dbReference type="NCBI Taxonomy" id="9685"/>
</organismHost>
<organismHost>
    <name type="scientific">Hexaprotodon liberiensis</name>
    <name type="common">Pygmy hippopotamus</name>
    <name type="synonym">Choeropsis liberiensis</name>
    <dbReference type="NCBI Taxonomy" id="56798"/>
</organismHost>
<organismHost>
    <name type="scientific">Lama glama</name>
    <name type="common">Llama</name>
    <dbReference type="NCBI Taxonomy" id="9844"/>
</organismHost>
<organismHost>
    <name type="scientific">Oryctolagus cuniculus</name>
    <name type="common">Rabbit</name>
    <dbReference type="NCBI Taxonomy" id="9986"/>
</organismHost>
<organismHost>
    <name type="scientific">Ovis aries</name>
    <name type="common">Sheep</name>
    <dbReference type="NCBI Taxonomy" id="9940"/>
</organismHost>
<organismHost>
    <name type="scientific">Struthio camelus</name>
    <name type="common">Common ostrich</name>
    <dbReference type="NCBI Taxonomy" id="8801"/>
</organismHost>
<organismHost>
    <name type="scientific">Varecia variegata</name>
    <name type="common">Black-and-white ruffed lemur</name>
    <name type="synonym">Lemur variegatus</name>
    <dbReference type="NCBI Taxonomy" id="9455"/>
</organismHost>
<organismHost>
    <name type="scientific">Vicugna pacos</name>
    <name type="common">Alpaca</name>
    <name type="synonym">Lama pacos</name>
    <dbReference type="NCBI Taxonomy" id="30538"/>
</organismHost>
<feature type="chain" id="PRO_0000079206" description="Matrix protein">
    <location>
        <begin position="1"/>
        <end position="142"/>
    </location>
</feature>
<feature type="binding site" evidence="6">
    <location>
        <begin position="64"/>
        <end position="66"/>
    </location>
    <ligand>
        <name>GMP</name>
        <dbReference type="ChEBI" id="CHEBI:58115"/>
    </ligand>
</feature>
<feature type="binding site" evidence="6">
    <location>
        <position position="117"/>
    </location>
    <ligand>
        <name>GMP</name>
        <dbReference type="ChEBI" id="CHEBI:58115"/>
    </ligand>
</feature>
<feature type="sequence variant" description="In strain: Isolate H1 and Isolate H2.">
    <original>E</original>
    <variation>D</variation>
    <location>
        <position position="108"/>
    </location>
</feature>
<feature type="sequence conflict" description="In Ref. 2; AAA20665." evidence="4" ref="2">
    <original>D</original>
    <variation>G</variation>
    <location>
        <position position="12"/>
    </location>
</feature>
<feature type="helix" evidence="8">
    <location>
        <begin position="12"/>
        <end position="14"/>
    </location>
</feature>
<feature type="strand" evidence="8">
    <location>
        <begin position="21"/>
        <end position="28"/>
    </location>
</feature>
<feature type="strand" evidence="7">
    <location>
        <begin position="29"/>
        <end position="33"/>
    </location>
</feature>
<feature type="strand" evidence="8">
    <location>
        <begin position="38"/>
        <end position="47"/>
    </location>
</feature>
<feature type="helix" evidence="8">
    <location>
        <begin position="57"/>
        <end position="60"/>
    </location>
</feature>
<feature type="strand" evidence="8">
    <location>
        <begin position="61"/>
        <end position="67"/>
    </location>
</feature>
<feature type="strand" evidence="8">
    <location>
        <begin position="69"/>
        <end position="71"/>
    </location>
</feature>
<feature type="strand" evidence="8">
    <location>
        <begin position="73"/>
        <end position="79"/>
    </location>
</feature>
<feature type="helix" evidence="8">
    <location>
        <begin position="81"/>
        <end position="90"/>
    </location>
</feature>
<feature type="strand" evidence="8">
    <location>
        <begin position="91"/>
        <end position="95"/>
    </location>
</feature>
<feature type="strand" evidence="8">
    <location>
        <begin position="99"/>
        <end position="104"/>
    </location>
</feature>
<feature type="helix" evidence="8">
    <location>
        <begin position="107"/>
        <end position="115"/>
    </location>
</feature>
<feature type="turn" evidence="8">
    <location>
        <begin position="116"/>
        <end position="118"/>
    </location>
</feature>
<feature type="strand" evidence="8">
    <location>
        <begin position="120"/>
        <end position="128"/>
    </location>
</feature>
<feature type="helix" evidence="8">
    <location>
        <begin position="134"/>
        <end position="139"/>
    </location>
</feature>
<sequence length="142" mass="16258">MNSKHSYVELKDKVIVPGWPTLMLEIDFVGGTSRNQFLNIPFLSVKEPLQLPREKKLTDYFTIDVEPAGHSLVNIYFQIDDFLLLTLNSLSVYKDPIRKYMFLRLNKEQSKHAINAAFNVFSYRLRNIGVGPLGPDIRSSGP</sequence>
<evidence type="ECO:0000250" key="1">
    <source>
        <dbReference type="UniProtKB" id="P0C795"/>
    </source>
</evidence>
<evidence type="ECO:0000269" key="2">
    <source>
    </source>
</evidence>
<evidence type="ECO:0000269" key="3">
    <source>
    </source>
</evidence>
<evidence type="ECO:0000305" key="4"/>
<evidence type="ECO:0007744" key="5">
    <source>
        <dbReference type="PDB" id="3F1J"/>
    </source>
</evidence>
<evidence type="ECO:0007744" key="6">
    <source>
        <dbReference type="PDB" id="4HIU"/>
    </source>
</evidence>
<evidence type="ECO:0007829" key="7">
    <source>
        <dbReference type="PDB" id="3F1J"/>
    </source>
</evidence>
<evidence type="ECO:0007829" key="8">
    <source>
        <dbReference type="PDB" id="4HI6"/>
    </source>
</evidence>
<proteinExistence type="evidence at protein level"/>
<keyword id="KW-0002">3D-structure</keyword>
<keyword id="KW-0025">Alternative splicing</keyword>
<keyword id="KW-0903">Direct protein sequencing</keyword>
<keyword id="KW-1032">Host cell membrane</keyword>
<keyword id="KW-1035">Host cytoplasm</keyword>
<keyword id="KW-1043">Host membrane</keyword>
<keyword id="KW-0472">Membrane</keyword>
<keyword id="KW-0468">Viral matrix protein</keyword>
<keyword id="KW-0946">Virion</keyword>
<reference key="1">
    <citation type="journal article" date="1994" name="J. Virol.">
        <title>Sequence and genome organization of Borna disease virus.</title>
        <authorList>
            <person name="Cubitt B."/>
            <person name="Oldstone C."/>
            <person name="de la Torre J.C."/>
        </authorList>
    </citation>
    <scope>NUCLEOTIDE SEQUENCE [GENOMIC RNA]</scope>
</reference>
<reference key="2">
    <citation type="submission" date="2001-03" db="EMBL/GenBank/DDBJ databases">
        <authorList>
            <person name="Cubitt B."/>
            <person name="Oldstone C."/>
            <person name="de la Torre J.C."/>
        </authorList>
    </citation>
    <scope>SEQUENCE REVISION TO 12</scope>
</reference>
<reference key="3">
    <citation type="submission" date="1996-03" db="EMBL/GenBank/DDBJ databases">
        <authorList>
            <person name="del la Torre J.C."/>
            <person name="Bode L."/>
            <person name="Durrwald R."/>
            <person name="Cubitt B."/>
            <person name="Ludwig H."/>
        </authorList>
    </citation>
    <scope>NUCLEOTIDE SEQUENCE [GENOMIC RNA]</scope>
    <source>
        <strain>Isolate H1</strain>
        <strain>Isolate H2</strain>
    </source>
</reference>
<reference key="4">
    <citation type="submission" date="1997-05" db="EMBL/GenBank/DDBJ databases">
        <authorList>
            <person name="Zimmermann W."/>
            <person name="Kokorsch J."/>
            <person name="Lundgren A.L."/>
            <person name="Ludwig H."/>
        </authorList>
    </citation>
    <scope>NUCLEOTIDE SEQUENCE [GENOMIC RNA]</scope>
    <source>
        <strain>Various strains</strain>
    </source>
</reference>
<reference key="5">
    <citation type="journal article" date="1994" name="J. Virol.">
        <title>Characterization of a Borna disease virus glycoprotein, gp18.</title>
        <authorList>
            <person name="Kliche S."/>
            <person name="Briese T."/>
            <person name="Henschen A.H."/>
            <person name="Stitz L."/>
            <person name="Lipkin W.I."/>
        </authorList>
    </citation>
    <scope>PROTEIN SEQUENCE OF 2-10; 24-31 AND 102-134</scope>
    <source>
        <strain>strain HE/80</strain>
    </source>
</reference>
<reference key="6">
    <citation type="journal article" date="2001" name="J. Virol.">
        <title>Open reading frame III of borna disease virus encodes a nonglycosylated matrix protein.</title>
        <authorList>
            <person name="Kraus I."/>
            <person name="Eickmann M."/>
            <person name="Kiermayer S."/>
            <person name="Scheffczik H."/>
            <person name="Fluess M."/>
            <person name="Richt J.A."/>
            <person name="Garten W."/>
        </authorList>
    </citation>
    <scope>CHARACTERIZATION</scope>
    <scope>SUBCELLULAR LOCATION</scope>
    <source>
        <strain>strain He/80</strain>
    </source>
</reference>
<reference key="7">
    <citation type="journal article" date="2002" name="Front. Biosci.">
        <title>Borna disease virus and infection in humans.</title>
        <authorList>
            <person name="Ikuta K."/>
            <person name="Ibrahim M.S."/>
            <person name="Kobayashi T."/>
            <person name="Tomonaga K."/>
        </authorList>
    </citation>
    <scope>REVIEW</scope>
</reference>
<reference evidence="5" key="8">
    <citation type="journal article" date="2009" name="Proc. Natl. Acad. Sci. U.S.A.">
        <title>Crystal structure of the Borna disease virus matrix protein (BDV-M) reveals ssRNA binding properties.</title>
        <authorList>
            <person name="Neumann P."/>
            <person name="Lieber D."/>
            <person name="Meyer S."/>
            <person name="Dautel P."/>
            <person name="Kerth A."/>
            <person name="Kraus I."/>
            <person name="Garten W."/>
            <person name="Stubbs M.T."/>
        </authorList>
    </citation>
    <scope>X-RAY CRYSTALLOGRAPHY (2.65 ANGSTROMS)</scope>
    <scope>RNA-BINDING</scope>
    <scope>SUBUNIT</scope>
    <source>
        <strain>He/80</strain>
    </source>
</reference>
<comment type="function">
    <text evidence="4">Plays a crucial role in virion assembly and budding.</text>
</comment>
<comment type="subunit">
    <text evidence="1 3">Homooligomer (By similarity). Homotetramer (PubMed:19237566). Interacts with phosphoprotein P (By similarity). Binds to ssRNA (PubMed:19237566).</text>
</comment>
<comment type="interaction">
    <interactant intactId="EBI-15760176">
        <id>P0C794</id>
    </interactant>
    <interactant intactId="EBI-15760176">
        <id>P0C794</id>
        <label>M</label>
    </interactant>
    <organismsDiffer>false</organismsDiffer>
    <experiments>2</experiments>
</comment>
<comment type="subcellular location">
    <subcellularLocation>
        <location evidence="4">Virion</location>
    </subcellularLocation>
    <subcellularLocation>
        <location evidence="1">Host cytoplasm</location>
    </subcellularLocation>
    <subcellularLocation>
        <location>Host cell membrane</location>
        <topology evidence="2">Peripheral membrane protein</topology>
    </subcellularLocation>
    <text evidence="1 2">During viral budding, associates with the inner side of the plasma membrane of infected cells (PubMed:11711600). Found in nuclear punctate structures that have been proposed to be the sites of viral replication and transcription, also termed viral speckles of transcripts (vSPOTs) (By similarity).</text>
</comment>
<comment type="alternative products">
    <event type="alternative splicing"/>
    <isoform>
        <id>P0C794-1</id>
        <name>Matrix protein</name>
        <sequence type="displayed"/>
    </isoform>
    <isoform>
        <id>Q8BB27-1</id>
        <name>Envelope glycoprotein p57 precursor</name>
        <sequence type="external"/>
    </isoform>
    <isoform>
        <id>Q8JMN0-1</id>
        <name>Large structural protein</name>
        <sequence type="external"/>
    </isoform>
</comment>
<comment type="PTM">
    <text evidence="2">Not glycosylated.</text>
</comment>
<name>MATRX_BDV1</name>
<organism>
    <name type="scientific">Borna disease virus 1</name>
    <name type="common">BoDV-1</name>
    <dbReference type="NCBI Taxonomy" id="1714621"/>
    <lineage>
        <taxon>Viruses</taxon>
        <taxon>Riboviria</taxon>
        <taxon>Orthornavirae</taxon>
        <taxon>Negarnaviricota</taxon>
        <taxon>Haploviricotina</taxon>
        <taxon>Monjiviricetes</taxon>
        <taxon>Mononegavirales</taxon>
        <taxon>Bornaviridae</taxon>
        <taxon>Orthobornavirus</taxon>
        <taxon>Orthobornavirus bornaense</taxon>
    </lineage>
</organism>
<dbReference type="EMBL" id="L76228">
    <property type="protein sequence ID" value="AAA91188.1"/>
    <property type="molecule type" value="Genomic_RNA"/>
</dbReference>
<dbReference type="EMBL" id="L76230">
    <property type="protein sequence ID" value="AAA91189.1"/>
    <property type="molecule type" value="Genomic_RNA"/>
</dbReference>
<dbReference type="EMBL" id="L27077">
    <property type="protein sequence ID" value="AAA20665.2"/>
    <property type="molecule type" value="Genomic_RNA"/>
</dbReference>
<dbReference type="EMBL" id="U94865">
    <property type="protein sequence ID" value="AAB53714.1"/>
    <property type="molecule type" value="Genomic_RNA"/>
</dbReference>
<dbReference type="EMBL" id="U94869">
    <property type="protein sequence ID" value="AAB53718.1"/>
    <property type="molecule type" value="Genomic_RNA"/>
</dbReference>
<dbReference type="EMBL" id="U94873">
    <property type="protein sequence ID" value="AAB53722.1"/>
    <property type="molecule type" value="Genomic_RNA"/>
</dbReference>
<dbReference type="EMBL" id="U94877">
    <property type="protein sequence ID" value="AAB53726.1"/>
    <property type="molecule type" value="Genomic_RNA"/>
</dbReference>
<dbReference type="EMBL" id="U94881">
    <property type="protein sequence ID" value="AAB53730.1"/>
    <property type="molecule type" value="Genomic_RNA"/>
</dbReference>
<dbReference type="RefSeq" id="NP_042022.1">
    <property type="nucleotide sequence ID" value="NC_001607.1"/>
</dbReference>
<dbReference type="PDB" id="3F1J">
    <property type="method" value="X-ray"/>
    <property type="resolution" value="2.65 A"/>
    <property type="chains" value="A=1-142"/>
</dbReference>
<dbReference type="PDB" id="4HI5">
    <property type="method" value="X-ray"/>
    <property type="resolution" value="3.60 A"/>
    <property type="chains" value="A=1-142"/>
</dbReference>
<dbReference type="PDB" id="4HI6">
    <property type="method" value="X-ray"/>
    <property type="resolution" value="2.20 A"/>
    <property type="chains" value="A/B/C/D=1-142"/>
</dbReference>
<dbReference type="PDB" id="4HIT">
    <property type="method" value="X-ray"/>
    <property type="resolution" value="2.40 A"/>
    <property type="chains" value="A/B/C/D=1-142"/>
</dbReference>
<dbReference type="PDB" id="4HIU">
    <property type="method" value="X-ray"/>
    <property type="resolution" value="3.30 A"/>
    <property type="chains" value="A=1-142"/>
</dbReference>
<dbReference type="PDB" id="4HIW">
    <property type="method" value="X-ray"/>
    <property type="resolution" value="2.90 A"/>
    <property type="chains" value="A=1-142"/>
</dbReference>
<dbReference type="PDB" id="4HIY">
    <property type="method" value="X-ray"/>
    <property type="resolution" value="3.31 A"/>
    <property type="chains" value="A=1-142"/>
</dbReference>
<dbReference type="PDBsum" id="3F1J"/>
<dbReference type="PDBsum" id="4HI5"/>
<dbReference type="PDBsum" id="4HI6"/>
<dbReference type="PDBsum" id="4HIT"/>
<dbReference type="PDBsum" id="4HIU"/>
<dbReference type="PDBsum" id="4HIW"/>
<dbReference type="PDBsum" id="4HIY"/>
<dbReference type="SMR" id="P0C794"/>
<dbReference type="OrthoDB" id="12045at10239"/>
<dbReference type="EvolutionaryTrace" id="P0C794"/>
<dbReference type="Proteomes" id="UP000185272">
    <property type="component" value="Genome"/>
</dbReference>
<dbReference type="GO" id="GO:0030430">
    <property type="term" value="C:host cell cytoplasm"/>
    <property type="evidence" value="ECO:0007669"/>
    <property type="project" value="UniProtKB-SubCell"/>
</dbReference>
<dbReference type="GO" id="GO:0020002">
    <property type="term" value="C:host cell plasma membrane"/>
    <property type="evidence" value="ECO:0007669"/>
    <property type="project" value="UniProtKB-SubCell"/>
</dbReference>
<dbReference type="GO" id="GO:0016020">
    <property type="term" value="C:membrane"/>
    <property type="evidence" value="ECO:0007669"/>
    <property type="project" value="UniProtKB-KW"/>
</dbReference>
<dbReference type="GO" id="GO:0044423">
    <property type="term" value="C:virion component"/>
    <property type="evidence" value="ECO:0007669"/>
    <property type="project" value="UniProtKB-KW"/>
</dbReference>
<dbReference type="GO" id="GO:0042802">
    <property type="term" value="F:identical protein binding"/>
    <property type="evidence" value="ECO:0000353"/>
    <property type="project" value="IntAct"/>
</dbReference>
<dbReference type="GO" id="GO:0039660">
    <property type="term" value="F:structural constituent of virion"/>
    <property type="evidence" value="ECO:0007669"/>
    <property type="project" value="UniProtKB-KW"/>
</dbReference>
<dbReference type="Gene3D" id="2.70.20.40">
    <property type="entry name" value="Borna disease virus, matrix protein"/>
    <property type="match status" value="1"/>
</dbReference>
<dbReference type="InterPro" id="IPR032414">
    <property type="entry name" value="BDV_M"/>
</dbReference>
<dbReference type="InterPro" id="IPR038520">
    <property type="entry name" value="BDV_M_sf"/>
</dbReference>
<dbReference type="Pfam" id="PF16520">
    <property type="entry name" value="Matrix_Borna"/>
    <property type="match status" value="1"/>
</dbReference>
<gene>
    <name type="primary">M</name>
</gene>